<dbReference type="EMBL" id="CP000857">
    <property type="protein sequence ID" value="ACN48001.1"/>
    <property type="molecule type" value="Genomic_DNA"/>
</dbReference>
<dbReference type="RefSeq" id="WP_000819627.1">
    <property type="nucleotide sequence ID" value="NC_012125.1"/>
</dbReference>
<dbReference type="SMR" id="C0Q2L5"/>
<dbReference type="KEGG" id="sei:SPC_3931"/>
<dbReference type="HOGENOM" id="CLU_001265_47_1_6"/>
<dbReference type="Proteomes" id="UP000001599">
    <property type="component" value="Chromosome"/>
</dbReference>
<dbReference type="GO" id="GO:0005886">
    <property type="term" value="C:plasma membrane"/>
    <property type="evidence" value="ECO:0007669"/>
    <property type="project" value="UniProtKB-SubCell"/>
</dbReference>
<dbReference type="GO" id="GO:0022857">
    <property type="term" value="F:transmembrane transporter activity"/>
    <property type="evidence" value="ECO:0007669"/>
    <property type="project" value="UniProtKB-UniRule"/>
</dbReference>
<dbReference type="CDD" id="cd17320">
    <property type="entry name" value="MFS_MdfA_MDR_like"/>
    <property type="match status" value="1"/>
</dbReference>
<dbReference type="FunFam" id="1.20.1720.10:FF:000003">
    <property type="entry name" value="Multidrug resistance protein MdtL"/>
    <property type="match status" value="1"/>
</dbReference>
<dbReference type="Gene3D" id="1.20.1720.10">
    <property type="entry name" value="Multidrug resistance protein D"/>
    <property type="match status" value="1"/>
</dbReference>
<dbReference type="HAMAP" id="MF_01530">
    <property type="entry name" value="MFS_MdtL"/>
    <property type="match status" value="1"/>
</dbReference>
<dbReference type="InterPro" id="IPR011701">
    <property type="entry name" value="MFS"/>
</dbReference>
<dbReference type="InterPro" id="IPR020846">
    <property type="entry name" value="MFS_dom"/>
</dbReference>
<dbReference type="InterPro" id="IPR036259">
    <property type="entry name" value="MFS_trans_sf"/>
</dbReference>
<dbReference type="InterPro" id="IPR023697">
    <property type="entry name" value="Multidrug-R_MdtL"/>
</dbReference>
<dbReference type="NCBIfam" id="NF007782">
    <property type="entry name" value="PRK10473.1"/>
    <property type="match status" value="1"/>
</dbReference>
<dbReference type="PANTHER" id="PTHR42718">
    <property type="entry name" value="MAJOR FACILITATOR SUPERFAMILY MULTIDRUG TRANSPORTER MFSC"/>
    <property type="match status" value="1"/>
</dbReference>
<dbReference type="PANTHER" id="PTHR42718:SF9">
    <property type="entry name" value="MAJOR FACILITATOR SUPERFAMILY MULTIDRUG TRANSPORTER MFSC"/>
    <property type="match status" value="1"/>
</dbReference>
<dbReference type="Pfam" id="PF07690">
    <property type="entry name" value="MFS_1"/>
    <property type="match status" value="1"/>
</dbReference>
<dbReference type="SUPFAM" id="SSF103473">
    <property type="entry name" value="MFS general substrate transporter"/>
    <property type="match status" value="1"/>
</dbReference>
<dbReference type="PROSITE" id="PS50850">
    <property type="entry name" value="MFS"/>
    <property type="match status" value="1"/>
</dbReference>
<organism>
    <name type="scientific">Salmonella paratyphi C (strain RKS4594)</name>
    <dbReference type="NCBI Taxonomy" id="476213"/>
    <lineage>
        <taxon>Bacteria</taxon>
        <taxon>Pseudomonadati</taxon>
        <taxon>Pseudomonadota</taxon>
        <taxon>Gammaproteobacteria</taxon>
        <taxon>Enterobacterales</taxon>
        <taxon>Enterobacteriaceae</taxon>
        <taxon>Salmonella</taxon>
    </lineage>
</organism>
<comment type="subcellular location">
    <subcellularLocation>
        <location evidence="1">Cell inner membrane</location>
        <topology evidence="1">Multi-pass membrane protein</topology>
    </subcellularLocation>
</comment>
<comment type="similarity">
    <text evidence="1">Belongs to the major facilitator superfamily. DHA1 family. MdtL (TC 2.A.1.2.22) subfamily.</text>
</comment>
<protein>
    <recommendedName>
        <fullName evidence="1">Multidrug resistance protein MdtL</fullName>
    </recommendedName>
</protein>
<accession>C0Q2L5</accession>
<evidence type="ECO:0000255" key="1">
    <source>
        <dbReference type="HAMAP-Rule" id="MF_01530"/>
    </source>
</evidence>
<name>MDTL_SALPC</name>
<reference key="1">
    <citation type="journal article" date="2009" name="PLoS ONE">
        <title>Salmonella paratyphi C: genetic divergence from Salmonella choleraesuis and pathogenic convergence with Salmonella typhi.</title>
        <authorList>
            <person name="Liu W.-Q."/>
            <person name="Feng Y."/>
            <person name="Wang Y."/>
            <person name="Zou Q.-H."/>
            <person name="Chen F."/>
            <person name="Guo J.-T."/>
            <person name="Peng Y.-H."/>
            <person name="Jin Y."/>
            <person name="Li Y.-G."/>
            <person name="Hu S.-N."/>
            <person name="Johnston R.N."/>
            <person name="Liu G.-R."/>
            <person name="Liu S.-L."/>
        </authorList>
    </citation>
    <scope>NUCLEOTIDE SEQUENCE [LARGE SCALE GENOMIC DNA]</scope>
    <source>
        <strain>RKS4594</strain>
    </source>
</reference>
<feature type="chain" id="PRO_1000185171" description="Multidrug resistance protein MdtL">
    <location>
        <begin position="1"/>
        <end position="395"/>
    </location>
</feature>
<feature type="transmembrane region" description="Helical" evidence="1">
    <location>
        <begin position="4"/>
        <end position="24"/>
    </location>
</feature>
<feature type="transmembrane region" description="Helical" evidence="1">
    <location>
        <begin position="42"/>
        <end position="62"/>
    </location>
</feature>
<feature type="transmembrane region" description="Helical" evidence="1">
    <location>
        <begin position="69"/>
        <end position="89"/>
    </location>
</feature>
<feature type="transmembrane region" description="Helical" evidence="1">
    <location>
        <begin position="93"/>
        <end position="113"/>
    </location>
</feature>
<feature type="transmembrane region" description="Helical" evidence="1">
    <location>
        <begin position="131"/>
        <end position="151"/>
    </location>
</feature>
<feature type="transmembrane region" description="Helical" evidence="1">
    <location>
        <begin position="158"/>
        <end position="178"/>
    </location>
</feature>
<feature type="transmembrane region" description="Helical" evidence="1">
    <location>
        <begin position="217"/>
        <end position="237"/>
    </location>
</feature>
<feature type="transmembrane region" description="Helical" evidence="1">
    <location>
        <begin position="247"/>
        <end position="267"/>
    </location>
</feature>
<feature type="transmembrane region" description="Helical" evidence="1">
    <location>
        <begin position="271"/>
        <end position="291"/>
    </location>
</feature>
<feature type="transmembrane region" description="Helical" evidence="1">
    <location>
        <begin position="295"/>
        <end position="315"/>
    </location>
</feature>
<feature type="transmembrane region" description="Helical" evidence="1">
    <location>
        <begin position="333"/>
        <end position="353"/>
    </location>
</feature>
<feature type="transmembrane region" description="Helical" evidence="1">
    <location>
        <begin position="358"/>
        <end position="378"/>
    </location>
</feature>
<proteinExistence type="inferred from homology"/>
<keyword id="KW-0997">Cell inner membrane</keyword>
<keyword id="KW-1003">Cell membrane</keyword>
<keyword id="KW-0472">Membrane</keyword>
<keyword id="KW-0812">Transmembrane</keyword>
<keyword id="KW-1133">Transmembrane helix</keyword>
<keyword id="KW-0813">Transport</keyword>
<gene>
    <name evidence="1" type="primary">mdtL</name>
    <name type="ordered locus">SPC_3931</name>
</gene>
<sequence>MKRFLLCSFALVLLYPAGIDMYLVGLPRIAVDLNASESQLHIAFSVYLAGMATAMLFAGKIADQSGRKPVAIVGAIVFMMASLLCSRASEGSLFLSGRFLQGIGAGGCYVVAFAILRDTLDEHRRAKVLSLLNGITCIVPVLAPVVGHLIMLRFPWQSLFYTMSAMGIIVGLLSLFILRETRPVRLAPRDLSRSSPAAESLINRFFVSRLAITTLSVSVILTFVNASPVLLMEVMGFSRGDYAITMALTAGVSMVVSFSTPFALGLFKPRTLMLVSQGLFLTAGVTLSLAHTNTVTLFGLTLICAGFSVGFGVAMSQALGPFSLRAGVASSTLGIAQVCGSSLWIWLAAILGISAMNMLIGILIGCSIVSILLIFSVAPNRSVAEHEEIPYQSRP</sequence>